<gene>
    <name evidence="1" type="primary">hcaD</name>
    <name type="ordered locus">Z3814</name>
    <name type="ordered locus">ECs3408</name>
</gene>
<accession>Q8XA71</accession>
<accession>Q7ABL5</accession>
<comment type="function">
    <text evidence="1">Part of the multicomponent 3-phenylpropionate dioxygenase, that converts 3-phenylpropionic acid (PP) and cinnamic acid (CI) into 3-phenylpropionate-dihydrodiol (PP-dihydrodiol) and cinnamic acid-dihydrodiol (CI-dihydrodiol), respectively.</text>
</comment>
<comment type="catalytic activity">
    <reaction evidence="1">
        <text>2 reduced [2Fe-2S]-[ferredoxin] + NAD(+) + H(+) = 2 oxidized [2Fe-2S]-[ferredoxin] + NADH</text>
        <dbReference type="Rhea" id="RHEA:16521"/>
        <dbReference type="Rhea" id="RHEA-COMP:10000"/>
        <dbReference type="Rhea" id="RHEA-COMP:10001"/>
        <dbReference type="ChEBI" id="CHEBI:15378"/>
        <dbReference type="ChEBI" id="CHEBI:33737"/>
        <dbReference type="ChEBI" id="CHEBI:33738"/>
        <dbReference type="ChEBI" id="CHEBI:57540"/>
        <dbReference type="ChEBI" id="CHEBI:57945"/>
        <dbReference type="EC" id="1.18.1.3"/>
    </reaction>
</comment>
<comment type="cofactor">
    <cofactor evidence="1">
        <name>FAD</name>
        <dbReference type="ChEBI" id="CHEBI:57692"/>
    </cofactor>
</comment>
<comment type="pathway">
    <text evidence="1">Aromatic compound metabolism; 3-phenylpropanoate degradation.</text>
</comment>
<comment type="subunit">
    <text evidence="1">This dioxygenase system consists of four proteins: the two subunits of the hydroxylase component (HcaE and HcaF), a ferredoxin (HcaC) and a ferredoxin reductase (HcaD).</text>
</comment>
<comment type="similarity">
    <text evidence="1">Belongs to the bacterial ring-hydroxylating dioxygenase ferredoxin reductase family.</text>
</comment>
<keyword id="KW-0058">Aromatic hydrocarbons catabolism</keyword>
<keyword id="KW-0274">FAD</keyword>
<keyword id="KW-0285">Flavoprotein</keyword>
<keyword id="KW-0520">NAD</keyword>
<keyword id="KW-0560">Oxidoreductase</keyword>
<keyword id="KW-1185">Reference proteome</keyword>
<protein>
    <recommendedName>
        <fullName evidence="1">3-phenylpropionate/cinnamic acid dioxygenase ferredoxin--NAD(+) reductase component</fullName>
        <ecNumber evidence="1">1.18.1.3</ecNumber>
    </recommendedName>
</protein>
<name>HCAD_ECO57</name>
<sequence length="400" mass="43906">MKEKTIIIVGGGQAAAMAAASLRQQGFTGELHLFSDEQHLPYERPPLSKSMLLEDSPQLQSVLPAHWWQENNVHLHSGVTIKTLGRDTRELVLANGESWHWDQLFIATGAAARPLPLLDALGERCFTLRHAGDAARLREVLQPERSVVIVGAGTIGLELAASATQRRCKVTVIELAATVMGRNAPPPVQRYLLQRHQQAGVRILLNNAIEHVVDGEKVELTLQSGETLQADVVIYGIGISANDQLAREANLDTTNGIVIDEACRTCDPAIFAGGDVAITRLDNGALHRCESWENANNHAQIAAAAMLGLPLPLLPPPWFWSDQYSDNLQFIGDMRGDDWLCRGNPETQKAIWFNLQNGVLIGAVTLNQGREIRSIRKWIQSGKTFDAKQLTDENIALKSL</sequence>
<proteinExistence type="inferred from homology"/>
<reference key="1">
    <citation type="journal article" date="2001" name="Nature">
        <title>Genome sequence of enterohaemorrhagic Escherichia coli O157:H7.</title>
        <authorList>
            <person name="Perna N.T."/>
            <person name="Plunkett G. III"/>
            <person name="Burland V."/>
            <person name="Mau B."/>
            <person name="Glasner J.D."/>
            <person name="Rose D.J."/>
            <person name="Mayhew G.F."/>
            <person name="Evans P.S."/>
            <person name="Gregor J."/>
            <person name="Kirkpatrick H.A."/>
            <person name="Posfai G."/>
            <person name="Hackett J."/>
            <person name="Klink S."/>
            <person name="Boutin A."/>
            <person name="Shao Y."/>
            <person name="Miller L."/>
            <person name="Grotbeck E.J."/>
            <person name="Davis N.W."/>
            <person name="Lim A."/>
            <person name="Dimalanta E.T."/>
            <person name="Potamousis K."/>
            <person name="Apodaca J."/>
            <person name="Anantharaman T.S."/>
            <person name="Lin J."/>
            <person name="Yen G."/>
            <person name="Schwartz D.C."/>
            <person name="Welch R.A."/>
            <person name="Blattner F.R."/>
        </authorList>
    </citation>
    <scope>NUCLEOTIDE SEQUENCE [LARGE SCALE GENOMIC DNA]</scope>
    <source>
        <strain>O157:H7 / EDL933 / ATCC 700927 / EHEC</strain>
    </source>
</reference>
<reference key="2">
    <citation type="journal article" date="2001" name="DNA Res.">
        <title>Complete genome sequence of enterohemorrhagic Escherichia coli O157:H7 and genomic comparison with a laboratory strain K-12.</title>
        <authorList>
            <person name="Hayashi T."/>
            <person name="Makino K."/>
            <person name="Ohnishi M."/>
            <person name="Kurokawa K."/>
            <person name="Ishii K."/>
            <person name="Yokoyama K."/>
            <person name="Han C.-G."/>
            <person name="Ohtsubo E."/>
            <person name="Nakayama K."/>
            <person name="Murata T."/>
            <person name="Tanaka M."/>
            <person name="Tobe T."/>
            <person name="Iida T."/>
            <person name="Takami H."/>
            <person name="Honda T."/>
            <person name="Sasakawa C."/>
            <person name="Ogasawara N."/>
            <person name="Yasunaga T."/>
            <person name="Kuhara S."/>
            <person name="Shiba T."/>
            <person name="Hattori M."/>
            <person name="Shinagawa H."/>
        </authorList>
    </citation>
    <scope>NUCLEOTIDE SEQUENCE [LARGE SCALE GENOMIC DNA]</scope>
    <source>
        <strain>O157:H7 / Sakai / RIMD 0509952 / EHEC</strain>
    </source>
</reference>
<feature type="chain" id="PRO_0000333725" description="3-phenylpropionate/cinnamic acid dioxygenase ferredoxin--NAD(+) reductase component">
    <location>
        <begin position="1"/>
        <end position="400"/>
    </location>
</feature>
<feature type="binding site" evidence="1">
    <location>
        <begin position="5"/>
        <end position="36"/>
    </location>
    <ligand>
        <name>FAD</name>
        <dbReference type="ChEBI" id="CHEBI:57692"/>
    </ligand>
</feature>
<feature type="binding site" evidence="1">
    <location>
        <begin position="146"/>
        <end position="174"/>
    </location>
    <ligand>
        <name>NAD(+)</name>
        <dbReference type="ChEBI" id="CHEBI:57540"/>
    </ligand>
</feature>
<dbReference type="EC" id="1.18.1.3" evidence="1"/>
<dbReference type="EMBL" id="AE005174">
    <property type="protein sequence ID" value="AAG57655.1"/>
    <property type="molecule type" value="Genomic_DNA"/>
</dbReference>
<dbReference type="EMBL" id="BA000007">
    <property type="protein sequence ID" value="BAB36831.1"/>
    <property type="molecule type" value="Genomic_DNA"/>
</dbReference>
<dbReference type="PIR" id="C85899">
    <property type="entry name" value="C85899"/>
</dbReference>
<dbReference type="PIR" id="H91054">
    <property type="entry name" value="H91054"/>
</dbReference>
<dbReference type="RefSeq" id="NP_311435.1">
    <property type="nucleotide sequence ID" value="NC_002695.1"/>
</dbReference>
<dbReference type="RefSeq" id="WP_000660766.1">
    <property type="nucleotide sequence ID" value="NZ_VOAI01000001.1"/>
</dbReference>
<dbReference type="SMR" id="Q8XA71"/>
<dbReference type="STRING" id="155864.Z3814"/>
<dbReference type="GeneID" id="914925"/>
<dbReference type="KEGG" id="ece:Z3814"/>
<dbReference type="KEGG" id="ecs:ECs_3408"/>
<dbReference type="PATRIC" id="fig|386585.9.peg.3560"/>
<dbReference type="eggNOG" id="COG0446">
    <property type="taxonomic scope" value="Bacteria"/>
</dbReference>
<dbReference type="HOGENOM" id="CLU_003291_4_0_6"/>
<dbReference type="OMA" id="PRCTHYG"/>
<dbReference type="UniPathway" id="UPA00714"/>
<dbReference type="Proteomes" id="UP000000558">
    <property type="component" value="Chromosome"/>
</dbReference>
<dbReference type="Proteomes" id="UP000002519">
    <property type="component" value="Chromosome"/>
</dbReference>
<dbReference type="GO" id="GO:0005737">
    <property type="term" value="C:cytoplasm"/>
    <property type="evidence" value="ECO:0007669"/>
    <property type="project" value="TreeGrafter"/>
</dbReference>
<dbReference type="GO" id="GO:0008695">
    <property type="term" value="F:3-phenylpropionate dioxygenase activity"/>
    <property type="evidence" value="ECO:0007669"/>
    <property type="project" value="UniProtKB-UniRule"/>
</dbReference>
<dbReference type="GO" id="GO:0008860">
    <property type="term" value="F:ferredoxin-NAD+ reductase activity"/>
    <property type="evidence" value="ECO:0007669"/>
    <property type="project" value="UniProtKB-EC"/>
</dbReference>
<dbReference type="GO" id="GO:0016651">
    <property type="term" value="F:oxidoreductase activity, acting on NAD(P)H"/>
    <property type="evidence" value="ECO:0007669"/>
    <property type="project" value="TreeGrafter"/>
</dbReference>
<dbReference type="GO" id="GO:0019380">
    <property type="term" value="P:3-phenylpropionate catabolic process"/>
    <property type="evidence" value="ECO:0007669"/>
    <property type="project" value="UniProtKB-UniRule"/>
</dbReference>
<dbReference type="FunFam" id="3.30.390.30:FF:000010">
    <property type="entry name" value="3-phenylpropionate/cinnamic acid dioxygenase ferredoxin--NAD(+) reductase component"/>
    <property type="match status" value="1"/>
</dbReference>
<dbReference type="FunFam" id="3.50.50.60:FF:000088">
    <property type="entry name" value="3-phenylpropionate/cinnamic acid dioxygenase ferredoxin--NAD(+) reductase component"/>
    <property type="match status" value="1"/>
</dbReference>
<dbReference type="Gene3D" id="3.30.390.30">
    <property type="match status" value="1"/>
</dbReference>
<dbReference type="Gene3D" id="3.50.50.60">
    <property type="entry name" value="FAD/NAD(P)-binding domain"/>
    <property type="match status" value="2"/>
</dbReference>
<dbReference type="HAMAP" id="MF_01651">
    <property type="entry name" value="HcaD"/>
    <property type="match status" value="1"/>
</dbReference>
<dbReference type="InterPro" id="IPR050446">
    <property type="entry name" value="FAD-oxidoreductase/Apoptosis"/>
</dbReference>
<dbReference type="InterPro" id="IPR036188">
    <property type="entry name" value="FAD/NAD-bd_sf"/>
</dbReference>
<dbReference type="InterPro" id="IPR023753">
    <property type="entry name" value="FAD/NAD-binding_dom"/>
</dbReference>
<dbReference type="InterPro" id="IPR016156">
    <property type="entry name" value="FAD/NAD-linked_Rdtase_dimer_sf"/>
</dbReference>
<dbReference type="InterPro" id="IPR023744">
    <property type="entry name" value="HcaD"/>
</dbReference>
<dbReference type="InterPro" id="IPR028202">
    <property type="entry name" value="Reductase_C"/>
</dbReference>
<dbReference type="InterPro" id="IPR053382">
    <property type="entry name" value="Ring-hydroxylating_dioxygenase"/>
</dbReference>
<dbReference type="NCBIfam" id="NF042949">
    <property type="entry name" value="3PPDioc_HcaD"/>
    <property type="match status" value="1"/>
</dbReference>
<dbReference type="NCBIfam" id="NF007286">
    <property type="entry name" value="PRK09754.1"/>
    <property type="match status" value="1"/>
</dbReference>
<dbReference type="PANTHER" id="PTHR43557">
    <property type="entry name" value="APOPTOSIS-INDUCING FACTOR 1"/>
    <property type="match status" value="1"/>
</dbReference>
<dbReference type="PANTHER" id="PTHR43557:SF2">
    <property type="entry name" value="RIESKE DOMAIN-CONTAINING PROTEIN-RELATED"/>
    <property type="match status" value="1"/>
</dbReference>
<dbReference type="Pfam" id="PF07992">
    <property type="entry name" value="Pyr_redox_2"/>
    <property type="match status" value="1"/>
</dbReference>
<dbReference type="Pfam" id="PF14759">
    <property type="entry name" value="Reductase_C"/>
    <property type="match status" value="1"/>
</dbReference>
<dbReference type="PRINTS" id="PR00368">
    <property type="entry name" value="FADPNR"/>
</dbReference>
<dbReference type="PRINTS" id="PR00411">
    <property type="entry name" value="PNDRDTASEI"/>
</dbReference>
<dbReference type="SUPFAM" id="SSF51905">
    <property type="entry name" value="FAD/NAD(P)-binding domain"/>
    <property type="match status" value="1"/>
</dbReference>
<dbReference type="SUPFAM" id="SSF55424">
    <property type="entry name" value="FAD/NAD-linked reductases, dimerisation (C-terminal) domain"/>
    <property type="match status" value="1"/>
</dbReference>
<evidence type="ECO:0000255" key="1">
    <source>
        <dbReference type="HAMAP-Rule" id="MF_01651"/>
    </source>
</evidence>
<organism>
    <name type="scientific">Escherichia coli O157:H7</name>
    <dbReference type="NCBI Taxonomy" id="83334"/>
    <lineage>
        <taxon>Bacteria</taxon>
        <taxon>Pseudomonadati</taxon>
        <taxon>Pseudomonadota</taxon>
        <taxon>Gammaproteobacteria</taxon>
        <taxon>Enterobacterales</taxon>
        <taxon>Enterobacteriaceae</taxon>
        <taxon>Escherichia</taxon>
    </lineage>
</organism>